<reference key="1">
    <citation type="journal article" date="2009" name="Vaccine">
        <title>Whole genome sequence analysis of Mycobacterium bovis bacillus Calmette-Guerin (BCG) Tokyo 172: a comparative study of BCG vaccine substrains.</title>
        <authorList>
            <person name="Seki M."/>
            <person name="Honda I."/>
            <person name="Fujita I."/>
            <person name="Yano I."/>
            <person name="Yamamoto S."/>
            <person name="Koyama A."/>
        </authorList>
    </citation>
    <scope>NUCLEOTIDE SEQUENCE [LARGE SCALE GENOMIC DNA]</scope>
    <source>
        <strain>BCG / Tokyo 172 / ATCC 35737 / TMC 1019</strain>
    </source>
</reference>
<gene>
    <name evidence="1" type="primary">rplO</name>
    <name type="ordered locus">JTY_0743</name>
</gene>
<feature type="chain" id="PRO_1000166307" description="Large ribosomal subunit protein uL15">
    <location>
        <begin position="1"/>
        <end position="146"/>
    </location>
</feature>
<feature type="region of interest" description="Disordered" evidence="2">
    <location>
        <begin position="1"/>
        <end position="41"/>
    </location>
</feature>
<feature type="compositionally biased region" description="Basic and acidic residues" evidence="2">
    <location>
        <begin position="1"/>
        <end position="10"/>
    </location>
</feature>
<name>RL15_MYCBT</name>
<organism>
    <name type="scientific">Mycobacterium bovis (strain BCG / Tokyo 172 / ATCC 35737 / TMC 1019)</name>
    <dbReference type="NCBI Taxonomy" id="561275"/>
    <lineage>
        <taxon>Bacteria</taxon>
        <taxon>Bacillati</taxon>
        <taxon>Actinomycetota</taxon>
        <taxon>Actinomycetes</taxon>
        <taxon>Mycobacteriales</taxon>
        <taxon>Mycobacteriaceae</taxon>
        <taxon>Mycobacterium</taxon>
        <taxon>Mycobacterium tuberculosis complex</taxon>
    </lineage>
</organism>
<comment type="function">
    <text evidence="1">Binds to the 23S rRNA.</text>
</comment>
<comment type="subunit">
    <text evidence="1">Part of the 50S ribosomal subunit.</text>
</comment>
<comment type="similarity">
    <text evidence="1">Belongs to the universal ribosomal protein uL15 family.</text>
</comment>
<proteinExistence type="inferred from homology"/>
<keyword id="KW-0687">Ribonucleoprotein</keyword>
<keyword id="KW-0689">Ribosomal protein</keyword>
<keyword id="KW-0694">RNA-binding</keyword>
<keyword id="KW-0699">rRNA-binding</keyword>
<dbReference type="EMBL" id="AP010918">
    <property type="protein sequence ID" value="BAH25036.1"/>
    <property type="molecule type" value="Genomic_DNA"/>
</dbReference>
<dbReference type="RefSeq" id="WP_003403685.1">
    <property type="nucleotide sequence ID" value="NZ_CP014566.1"/>
</dbReference>
<dbReference type="SMR" id="C1AL57"/>
<dbReference type="KEGG" id="mbt:JTY_0743"/>
<dbReference type="HOGENOM" id="CLU_055188_4_1_11"/>
<dbReference type="GO" id="GO:0022625">
    <property type="term" value="C:cytosolic large ribosomal subunit"/>
    <property type="evidence" value="ECO:0007669"/>
    <property type="project" value="TreeGrafter"/>
</dbReference>
<dbReference type="GO" id="GO:0019843">
    <property type="term" value="F:rRNA binding"/>
    <property type="evidence" value="ECO:0007669"/>
    <property type="project" value="UniProtKB-UniRule"/>
</dbReference>
<dbReference type="GO" id="GO:0003735">
    <property type="term" value="F:structural constituent of ribosome"/>
    <property type="evidence" value="ECO:0007669"/>
    <property type="project" value="InterPro"/>
</dbReference>
<dbReference type="GO" id="GO:0006412">
    <property type="term" value="P:translation"/>
    <property type="evidence" value="ECO:0007669"/>
    <property type="project" value="UniProtKB-UniRule"/>
</dbReference>
<dbReference type="FunFam" id="3.100.10.10:FF:000005">
    <property type="entry name" value="50S ribosomal protein L15"/>
    <property type="match status" value="1"/>
</dbReference>
<dbReference type="Gene3D" id="3.100.10.10">
    <property type="match status" value="1"/>
</dbReference>
<dbReference type="HAMAP" id="MF_01341">
    <property type="entry name" value="Ribosomal_uL15"/>
    <property type="match status" value="1"/>
</dbReference>
<dbReference type="InterPro" id="IPR030878">
    <property type="entry name" value="Ribosomal_uL15"/>
</dbReference>
<dbReference type="InterPro" id="IPR021131">
    <property type="entry name" value="Ribosomal_uL15/eL18"/>
</dbReference>
<dbReference type="InterPro" id="IPR036227">
    <property type="entry name" value="Ribosomal_uL15/eL18_sf"/>
</dbReference>
<dbReference type="InterPro" id="IPR005749">
    <property type="entry name" value="Ribosomal_uL15_bac-type"/>
</dbReference>
<dbReference type="InterPro" id="IPR001196">
    <property type="entry name" value="Ribosomal_uL15_CS"/>
</dbReference>
<dbReference type="NCBIfam" id="TIGR01071">
    <property type="entry name" value="rplO_bact"/>
    <property type="match status" value="1"/>
</dbReference>
<dbReference type="PANTHER" id="PTHR12934">
    <property type="entry name" value="50S RIBOSOMAL PROTEIN L15"/>
    <property type="match status" value="1"/>
</dbReference>
<dbReference type="PANTHER" id="PTHR12934:SF11">
    <property type="entry name" value="LARGE RIBOSOMAL SUBUNIT PROTEIN UL15M"/>
    <property type="match status" value="1"/>
</dbReference>
<dbReference type="Pfam" id="PF00828">
    <property type="entry name" value="Ribosomal_L27A"/>
    <property type="match status" value="1"/>
</dbReference>
<dbReference type="SUPFAM" id="SSF52080">
    <property type="entry name" value="Ribosomal proteins L15p and L18e"/>
    <property type="match status" value="1"/>
</dbReference>
<dbReference type="PROSITE" id="PS00475">
    <property type="entry name" value="RIBOSOMAL_L15"/>
    <property type="match status" value="1"/>
</dbReference>
<accession>C1AL57</accession>
<protein>
    <recommendedName>
        <fullName evidence="1">Large ribosomal subunit protein uL15</fullName>
    </recommendedName>
    <alternativeName>
        <fullName evidence="3">50S ribosomal protein L15</fullName>
    </alternativeName>
</protein>
<sequence>MTLKLHDLRPARGSKTARTRVGRGDGSKGKTAGRGTKGTRARKQVPVTFEGGQMPIHMRLPKLKGFRNRFRTEYEIVNVGDINRLFPQGGAVGVDDLVAKGAVRKNALVKVLGDGKLTAKVDVSAHKFSGSARAKITAAGGSATEL</sequence>
<evidence type="ECO:0000255" key="1">
    <source>
        <dbReference type="HAMAP-Rule" id="MF_01341"/>
    </source>
</evidence>
<evidence type="ECO:0000256" key="2">
    <source>
        <dbReference type="SAM" id="MobiDB-lite"/>
    </source>
</evidence>
<evidence type="ECO:0000305" key="3"/>